<organism>
    <name type="scientific">Dinoroseobacter shibae (strain DSM 16493 / NCIMB 14021 / DFL 12)</name>
    <dbReference type="NCBI Taxonomy" id="398580"/>
    <lineage>
        <taxon>Bacteria</taxon>
        <taxon>Pseudomonadati</taxon>
        <taxon>Pseudomonadota</taxon>
        <taxon>Alphaproteobacteria</taxon>
        <taxon>Rhodobacterales</taxon>
        <taxon>Roseobacteraceae</taxon>
        <taxon>Dinoroseobacter</taxon>
    </lineage>
</organism>
<protein>
    <recommendedName>
        <fullName evidence="1">Large ribosomal subunit protein bL32</fullName>
    </recommendedName>
    <alternativeName>
        <fullName evidence="3">50S ribosomal protein L32</fullName>
    </alternativeName>
</protein>
<evidence type="ECO:0000255" key="1">
    <source>
        <dbReference type="HAMAP-Rule" id="MF_00340"/>
    </source>
</evidence>
<evidence type="ECO:0000256" key="2">
    <source>
        <dbReference type="SAM" id="MobiDB-lite"/>
    </source>
</evidence>
<evidence type="ECO:0000305" key="3"/>
<reference key="1">
    <citation type="journal article" date="2010" name="ISME J.">
        <title>The complete genome sequence of the algal symbiont Dinoroseobacter shibae: a hitchhiker's guide to life in the sea.</title>
        <authorList>
            <person name="Wagner-Dobler I."/>
            <person name="Ballhausen B."/>
            <person name="Berger M."/>
            <person name="Brinkhoff T."/>
            <person name="Buchholz I."/>
            <person name="Bunk B."/>
            <person name="Cypionka H."/>
            <person name="Daniel R."/>
            <person name="Drepper T."/>
            <person name="Gerdts G."/>
            <person name="Hahnke S."/>
            <person name="Han C."/>
            <person name="Jahn D."/>
            <person name="Kalhoefer D."/>
            <person name="Kiss H."/>
            <person name="Klenk H.P."/>
            <person name="Kyrpides N."/>
            <person name="Liebl W."/>
            <person name="Liesegang H."/>
            <person name="Meincke L."/>
            <person name="Pati A."/>
            <person name="Petersen J."/>
            <person name="Piekarski T."/>
            <person name="Pommerenke C."/>
            <person name="Pradella S."/>
            <person name="Pukall R."/>
            <person name="Rabus R."/>
            <person name="Stackebrandt E."/>
            <person name="Thole S."/>
            <person name="Thompson L."/>
            <person name="Tielen P."/>
            <person name="Tomasch J."/>
            <person name="von Jan M."/>
            <person name="Wanphrut N."/>
            <person name="Wichels A."/>
            <person name="Zech H."/>
            <person name="Simon M."/>
        </authorList>
    </citation>
    <scope>NUCLEOTIDE SEQUENCE [LARGE SCALE GENOMIC DNA]</scope>
    <source>
        <strain>DSM 16493 / NCIMB 14021 / DFL 12</strain>
    </source>
</reference>
<name>RL32_DINSH</name>
<feature type="chain" id="PRO_1000079327" description="Large ribosomal subunit protein bL32">
    <location>
        <begin position="1"/>
        <end position="68"/>
    </location>
</feature>
<feature type="region of interest" description="Disordered" evidence="2">
    <location>
        <begin position="1"/>
        <end position="25"/>
    </location>
</feature>
<sequence length="68" mass="7450">MAVPQNKITKSRRGQRRSHDALVAGNPNECPNCGELKRPHHVCAACGHYADREVIAQADEIDLDEDAA</sequence>
<gene>
    <name evidence="1" type="primary">rpmF</name>
    <name type="ordered locus">Dshi_1718</name>
</gene>
<dbReference type="EMBL" id="CP000830">
    <property type="protein sequence ID" value="ABV93460.1"/>
    <property type="molecule type" value="Genomic_DNA"/>
</dbReference>
<dbReference type="RefSeq" id="WP_012178390.1">
    <property type="nucleotide sequence ID" value="NC_009952.1"/>
</dbReference>
<dbReference type="SMR" id="A8LLT2"/>
<dbReference type="STRING" id="398580.Dshi_1718"/>
<dbReference type="KEGG" id="dsh:Dshi_1718"/>
<dbReference type="eggNOG" id="COG0333">
    <property type="taxonomic scope" value="Bacteria"/>
</dbReference>
<dbReference type="HOGENOM" id="CLU_129084_1_3_5"/>
<dbReference type="OrthoDB" id="9801927at2"/>
<dbReference type="Proteomes" id="UP000006833">
    <property type="component" value="Chromosome"/>
</dbReference>
<dbReference type="GO" id="GO:0015934">
    <property type="term" value="C:large ribosomal subunit"/>
    <property type="evidence" value="ECO:0007669"/>
    <property type="project" value="InterPro"/>
</dbReference>
<dbReference type="GO" id="GO:0003735">
    <property type="term" value="F:structural constituent of ribosome"/>
    <property type="evidence" value="ECO:0007669"/>
    <property type="project" value="InterPro"/>
</dbReference>
<dbReference type="GO" id="GO:0006412">
    <property type="term" value="P:translation"/>
    <property type="evidence" value="ECO:0007669"/>
    <property type="project" value="UniProtKB-UniRule"/>
</dbReference>
<dbReference type="Gene3D" id="1.20.5.640">
    <property type="entry name" value="Single helix bin"/>
    <property type="match status" value="1"/>
</dbReference>
<dbReference type="HAMAP" id="MF_00340">
    <property type="entry name" value="Ribosomal_bL32"/>
    <property type="match status" value="1"/>
</dbReference>
<dbReference type="InterPro" id="IPR002677">
    <property type="entry name" value="Ribosomal_bL32"/>
</dbReference>
<dbReference type="InterPro" id="IPR044957">
    <property type="entry name" value="Ribosomal_bL32_bact"/>
</dbReference>
<dbReference type="InterPro" id="IPR011332">
    <property type="entry name" value="Ribosomal_zn-bd"/>
</dbReference>
<dbReference type="NCBIfam" id="TIGR01031">
    <property type="entry name" value="rpmF_bact"/>
    <property type="match status" value="1"/>
</dbReference>
<dbReference type="PANTHER" id="PTHR35534">
    <property type="entry name" value="50S RIBOSOMAL PROTEIN L32"/>
    <property type="match status" value="1"/>
</dbReference>
<dbReference type="PANTHER" id="PTHR35534:SF1">
    <property type="entry name" value="LARGE RIBOSOMAL SUBUNIT PROTEIN BL32"/>
    <property type="match status" value="1"/>
</dbReference>
<dbReference type="Pfam" id="PF01783">
    <property type="entry name" value="Ribosomal_L32p"/>
    <property type="match status" value="1"/>
</dbReference>
<dbReference type="SUPFAM" id="SSF57829">
    <property type="entry name" value="Zn-binding ribosomal proteins"/>
    <property type="match status" value="1"/>
</dbReference>
<proteinExistence type="inferred from homology"/>
<keyword id="KW-1185">Reference proteome</keyword>
<keyword id="KW-0687">Ribonucleoprotein</keyword>
<keyword id="KW-0689">Ribosomal protein</keyword>
<comment type="similarity">
    <text evidence="1">Belongs to the bacterial ribosomal protein bL32 family.</text>
</comment>
<accession>A8LLT2</accession>